<accession>P9WG89</accession>
<accession>L0T4Q5</accession>
<accession>P71836</accession>
<accession>Q8VKE2</accession>
<sequence length="540" mass="56587">MLGNAMVEACPAEGDAPVPITPAGRPRSGQRSYPDRLDVGLLRTAGVCVLASVMAHVDVTVVSVAQRTFVADFGSTQAVVAWTMTGYMLALATVIPTAGWAADRFGTRRLFMGSVLAFTLGSLLCAVAPNILLLIIFRVVQGFGGGMLTPVSFAILAREAGPKRLGRVMAVVGIPMLLGPVGGPILGGWLIGAYGWRWIFLVNLPVGLSALVLAAIVFPRDRPAASENFDYMGLLLLSPGLATFLFGVSSSPARGTMADRHVLIPAITGLALIAAFVAHSWYRTEHPLIDMRLFQNRAVAQANMTMTVLSLGLFGSFLLLPSYLQQVLHQSPMQSGVHIIPQGLGAMLAMPIAGAMMDRRGPAKIVLVGIMLIAAGLGTFAFGVARQADYLPILPTGLAIMGMGMGCSMMPLSGAAVQTLAPHQIARGSTLISVNQQVGGSIGTALMSVLLTYQFNHSEIIATAKKVALTPESGAGRGAAVDPSSLPRQTNFAAQLLHDLSHAYAVVFVIATALVVSTLIPAAFLPKQQASHRRAPLLSA</sequence>
<feature type="chain" id="PRO_0000390687" description="Multidrug resistance protein B homolog">
    <location>
        <begin position="1"/>
        <end position="540"/>
    </location>
</feature>
<feature type="transmembrane region" description="Helical" evidence="1">
    <location>
        <begin position="45"/>
        <end position="65"/>
    </location>
</feature>
<feature type="transmembrane region" description="Helical" evidence="1">
    <location>
        <begin position="78"/>
        <end position="98"/>
    </location>
</feature>
<feature type="transmembrane region" description="Helical" evidence="1">
    <location>
        <begin position="117"/>
        <end position="137"/>
    </location>
</feature>
<feature type="transmembrane region" description="Helical" evidence="1">
    <location>
        <begin position="171"/>
        <end position="191"/>
    </location>
</feature>
<feature type="transmembrane region" description="Helical" evidence="1">
    <location>
        <begin position="198"/>
        <end position="218"/>
    </location>
</feature>
<feature type="transmembrane region" description="Helical" evidence="1">
    <location>
        <begin position="229"/>
        <end position="249"/>
    </location>
</feature>
<feature type="transmembrane region" description="Helical" evidence="1">
    <location>
        <begin position="262"/>
        <end position="282"/>
    </location>
</feature>
<feature type="transmembrane region" description="Helical" evidence="1">
    <location>
        <begin position="304"/>
        <end position="324"/>
    </location>
</feature>
<feature type="transmembrane region" description="Helical" evidence="1">
    <location>
        <begin position="337"/>
        <end position="357"/>
    </location>
</feature>
<feature type="transmembrane region" description="Helical" evidence="1">
    <location>
        <begin position="365"/>
        <end position="385"/>
    </location>
</feature>
<feature type="transmembrane region" description="Helical" evidence="1">
    <location>
        <begin position="390"/>
        <end position="410"/>
    </location>
</feature>
<feature type="transmembrane region" description="Helical" evidence="1">
    <location>
        <begin position="431"/>
        <end position="451"/>
    </location>
</feature>
<feature type="transmembrane region" description="Helical" evidence="1">
    <location>
        <begin position="505"/>
        <end position="525"/>
    </location>
</feature>
<gene>
    <name type="primary">emrB</name>
    <name type="ordered locus">Rv0783c</name>
</gene>
<organism>
    <name type="scientific">Mycobacterium tuberculosis (strain ATCC 25618 / H37Rv)</name>
    <dbReference type="NCBI Taxonomy" id="83332"/>
    <lineage>
        <taxon>Bacteria</taxon>
        <taxon>Bacillati</taxon>
        <taxon>Actinomycetota</taxon>
        <taxon>Actinomycetes</taxon>
        <taxon>Mycobacteriales</taxon>
        <taxon>Mycobacteriaceae</taxon>
        <taxon>Mycobacterium</taxon>
        <taxon>Mycobacterium tuberculosis complex</taxon>
    </lineage>
</organism>
<evidence type="ECO:0000255" key="1"/>
<evidence type="ECO:0000305" key="2"/>
<comment type="subcellular location">
    <subcellularLocation>
        <location evidence="2">Cell membrane</location>
        <topology evidence="2">Multi-pass membrane protein</topology>
    </subcellularLocation>
</comment>
<comment type="similarity">
    <text evidence="2">Belongs to the major facilitator superfamily. EmrB family.</text>
</comment>
<proteinExistence type="inferred from homology"/>
<name>EMRB_MYCTU</name>
<keyword id="KW-1003">Cell membrane</keyword>
<keyword id="KW-0472">Membrane</keyword>
<keyword id="KW-1185">Reference proteome</keyword>
<keyword id="KW-0812">Transmembrane</keyword>
<keyword id="KW-1133">Transmembrane helix</keyword>
<keyword id="KW-0813">Transport</keyword>
<reference key="1">
    <citation type="journal article" date="1998" name="Nature">
        <title>Deciphering the biology of Mycobacterium tuberculosis from the complete genome sequence.</title>
        <authorList>
            <person name="Cole S.T."/>
            <person name="Brosch R."/>
            <person name="Parkhill J."/>
            <person name="Garnier T."/>
            <person name="Churcher C.M."/>
            <person name="Harris D.E."/>
            <person name="Gordon S.V."/>
            <person name="Eiglmeier K."/>
            <person name="Gas S."/>
            <person name="Barry C.E. III"/>
            <person name="Tekaia F."/>
            <person name="Badcock K."/>
            <person name="Basham D."/>
            <person name="Brown D."/>
            <person name="Chillingworth T."/>
            <person name="Connor R."/>
            <person name="Davies R.M."/>
            <person name="Devlin K."/>
            <person name="Feltwell T."/>
            <person name="Gentles S."/>
            <person name="Hamlin N."/>
            <person name="Holroyd S."/>
            <person name="Hornsby T."/>
            <person name="Jagels K."/>
            <person name="Krogh A."/>
            <person name="McLean J."/>
            <person name="Moule S."/>
            <person name="Murphy L.D."/>
            <person name="Oliver S."/>
            <person name="Osborne J."/>
            <person name="Quail M.A."/>
            <person name="Rajandream M.A."/>
            <person name="Rogers J."/>
            <person name="Rutter S."/>
            <person name="Seeger K."/>
            <person name="Skelton S."/>
            <person name="Squares S."/>
            <person name="Squares R."/>
            <person name="Sulston J.E."/>
            <person name="Taylor K."/>
            <person name="Whitehead S."/>
            <person name="Barrell B.G."/>
        </authorList>
    </citation>
    <scope>NUCLEOTIDE SEQUENCE [LARGE SCALE GENOMIC DNA]</scope>
    <source>
        <strain>ATCC 25618 / H37Rv</strain>
    </source>
</reference>
<protein>
    <recommendedName>
        <fullName>Multidrug resistance protein B homolog</fullName>
    </recommendedName>
</protein>
<dbReference type="EMBL" id="AL123456">
    <property type="protein sequence ID" value="CCP43530.1"/>
    <property type="molecule type" value="Genomic_DNA"/>
</dbReference>
<dbReference type="PIR" id="B70709">
    <property type="entry name" value="B70709"/>
</dbReference>
<dbReference type="RefSeq" id="NP_215297.1">
    <property type="nucleotide sequence ID" value="NC_000962.3"/>
</dbReference>
<dbReference type="RefSeq" id="WP_003403977.1">
    <property type="nucleotide sequence ID" value="NZ_NVQJ01000035.1"/>
</dbReference>
<dbReference type="SMR" id="P9WG89"/>
<dbReference type="FunCoup" id="P9WG89">
    <property type="interactions" value="38"/>
</dbReference>
<dbReference type="STRING" id="83332.Rv0783c"/>
<dbReference type="PaxDb" id="83332-Rv0783c"/>
<dbReference type="DNASU" id="885836"/>
<dbReference type="GeneID" id="885836"/>
<dbReference type="KEGG" id="mtu:Rv0783c"/>
<dbReference type="KEGG" id="mtv:RVBD_0783c"/>
<dbReference type="TubercuList" id="Rv0783c"/>
<dbReference type="eggNOG" id="COG0477">
    <property type="taxonomic scope" value="Bacteria"/>
</dbReference>
<dbReference type="InParanoid" id="P9WG89"/>
<dbReference type="OrthoDB" id="9812221at2"/>
<dbReference type="PhylomeDB" id="P9WG89"/>
<dbReference type="Proteomes" id="UP000001584">
    <property type="component" value="Chromosome"/>
</dbReference>
<dbReference type="GO" id="GO:0005576">
    <property type="term" value="C:extracellular region"/>
    <property type="evidence" value="ECO:0007005"/>
    <property type="project" value="MTBBASE"/>
</dbReference>
<dbReference type="GO" id="GO:0005886">
    <property type="term" value="C:plasma membrane"/>
    <property type="evidence" value="ECO:0000318"/>
    <property type="project" value="GO_Central"/>
</dbReference>
<dbReference type="GO" id="GO:0022857">
    <property type="term" value="F:transmembrane transporter activity"/>
    <property type="evidence" value="ECO:0000318"/>
    <property type="project" value="GO_Central"/>
</dbReference>
<dbReference type="GO" id="GO:0055085">
    <property type="term" value="P:transmembrane transport"/>
    <property type="evidence" value="ECO:0000318"/>
    <property type="project" value="GO_Central"/>
</dbReference>
<dbReference type="CDD" id="cd17503">
    <property type="entry name" value="MFS_LmrB_MDR_like"/>
    <property type="match status" value="1"/>
</dbReference>
<dbReference type="FunFam" id="1.20.1720.10:FF:000029">
    <property type="entry name" value="Multidrug resistance membrane efflux protein emrB"/>
    <property type="match status" value="1"/>
</dbReference>
<dbReference type="Gene3D" id="1.20.1250.20">
    <property type="entry name" value="MFS general substrate transporter like domains"/>
    <property type="match status" value="1"/>
</dbReference>
<dbReference type="Gene3D" id="1.20.1720.10">
    <property type="entry name" value="Multidrug resistance protein D"/>
    <property type="match status" value="1"/>
</dbReference>
<dbReference type="InterPro" id="IPR004638">
    <property type="entry name" value="EmrB-like"/>
</dbReference>
<dbReference type="InterPro" id="IPR011701">
    <property type="entry name" value="MFS"/>
</dbReference>
<dbReference type="InterPro" id="IPR020846">
    <property type="entry name" value="MFS_dom"/>
</dbReference>
<dbReference type="InterPro" id="IPR036259">
    <property type="entry name" value="MFS_trans_sf"/>
</dbReference>
<dbReference type="NCBIfam" id="TIGR00711">
    <property type="entry name" value="efflux_EmrB"/>
    <property type="match status" value="1"/>
</dbReference>
<dbReference type="PANTHER" id="PTHR42718:SF46">
    <property type="entry name" value="BLR6921 PROTEIN"/>
    <property type="match status" value="1"/>
</dbReference>
<dbReference type="PANTHER" id="PTHR42718">
    <property type="entry name" value="MAJOR FACILITATOR SUPERFAMILY MULTIDRUG TRANSPORTER MFSC"/>
    <property type="match status" value="1"/>
</dbReference>
<dbReference type="Pfam" id="PF07690">
    <property type="entry name" value="MFS_1"/>
    <property type="match status" value="1"/>
</dbReference>
<dbReference type="SUPFAM" id="SSF103473">
    <property type="entry name" value="MFS general substrate transporter"/>
    <property type="match status" value="1"/>
</dbReference>
<dbReference type="PROSITE" id="PS50850">
    <property type="entry name" value="MFS"/>
    <property type="match status" value="1"/>
</dbReference>